<evidence type="ECO:0000255" key="1">
    <source>
        <dbReference type="PROSITE-ProRule" id="PRU01210"/>
    </source>
</evidence>
<evidence type="ECO:0000269" key="2">
    <source>
    </source>
</evidence>
<evidence type="ECO:0000269" key="3">
    <source>
    </source>
</evidence>
<evidence type="ECO:0000269" key="4">
    <source>
    </source>
</evidence>
<evidence type="ECO:0000269" key="5">
    <source>
    </source>
</evidence>
<evidence type="ECO:0000303" key="6">
    <source>
    </source>
</evidence>
<evidence type="ECO:0000303" key="7">
    <source>
    </source>
</evidence>
<evidence type="ECO:0000305" key="8"/>
<evidence type="ECO:0000305" key="9">
    <source>
    </source>
</evidence>
<feature type="chain" id="PRO_0000066826" description="Alpha-toxin Ts5" evidence="4">
    <location>
        <begin position="1"/>
        <end position="64"/>
    </location>
</feature>
<feature type="domain" description="LCN-type CS-alpha/beta" evidence="1">
    <location>
        <begin position="2"/>
        <end position="64"/>
    </location>
</feature>
<feature type="disulfide bond" evidence="1">
    <location>
        <begin position="12"/>
        <end position="64"/>
    </location>
</feature>
<feature type="disulfide bond" evidence="1">
    <location>
        <begin position="16"/>
        <end position="38"/>
    </location>
</feature>
<feature type="disulfide bond" evidence="1">
    <location>
        <begin position="24"/>
        <end position="44"/>
    </location>
</feature>
<feature type="disulfide bond" evidence="1">
    <location>
        <begin position="28"/>
        <end position="46"/>
    </location>
</feature>
<keyword id="KW-0903">Direct protein sequencing</keyword>
<keyword id="KW-1015">Disulfide bond</keyword>
<keyword id="KW-0872">Ion channel impairing toxin</keyword>
<keyword id="KW-0528">Neurotoxin</keyword>
<keyword id="KW-0964">Secreted</keyword>
<keyword id="KW-0800">Toxin</keyword>
<keyword id="KW-0738">Voltage-gated sodium channel impairing toxin</keyword>
<dbReference type="PIR" id="S60352">
    <property type="entry name" value="S60352"/>
</dbReference>
<dbReference type="SMR" id="P46115"/>
<dbReference type="GO" id="GO:0005576">
    <property type="term" value="C:extracellular region"/>
    <property type="evidence" value="ECO:0007669"/>
    <property type="project" value="UniProtKB-SubCell"/>
</dbReference>
<dbReference type="GO" id="GO:0019871">
    <property type="term" value="F:sodium channel inhibitor activity"/>
    <property type="evidence" value="ECO:0007669"/>
    <property type="project" value="InterPro"/>
</dbReference>
<dbReference type="GO" id="GO:0090729">
    <property type="term" value="F:toxin activity"/>
    <property type="evidence" value="ECO:0007669"/>
    <property type="project" value="UniProtKB-KW"/>
</dbReference>
<dbReference type="GO" id="GO:0006952">
    <property type="term" value="P:defense response"/>
    <property type="evidence" value="ECO:0007669"/>
    <property type="project" value="InterPro"/>
</dbReference>
<dbReference type="CDD" id="cd23106">
    <property type="entry name" value="neurotoxins_LC_scorpion"/>
    <property type="match status" value="1"/>
</dbReference>
<dbReference type="Gene3D" id="3.30.30.10">
    <property type="entry name" value="Knottin, scorpion toxin-like"/>
    <property type="match status" value="1"/>
</dbReference>
<dbReference type="InterPro" id="IPR044062">
    <property type="entry name" value="LCN-type_CS_alpha_beta_dom"/>
</dbReference>
<dbReference type="InterPro" id="IPR003614">
    <property type="entry name" value="Scorpion_toxin-like"/>
</dbReference>
<dbReference type="InterPro" id="IPR036574">
    <property type="entry name" value="Scorpion_toxin-like_sf"/>
</dbReference>
<dbReference type="InterPro" id="IPR018218">
    <property type="entry name" value="Scorpion_toxinL"/>
</dbReference>
<dbReference type="InterPro" id="IPR002061">
    <property type="entry name" value="Scorpion_toxinL/defensin"/>
</dbReference>
<dbReference type="Pfam" id="PF00537">
    <property type="entry name" value="Toxin_3"/>
    <property type="match status" value="1"/>
</dbReference>
<dbReference type="PRINTS" id="PR00285">
    <property type="entry name" value="SCORPNTOXIN"/>
</dbReference>
<dbReference type="SMART" id="SM00505">
    <property type="entry name" value="Knot1"/>
    <property type="match status" value="1"/>
</dbReference>
<dbReference type="SUPFAM" id="SSF57095">
    <property type="entry name" value="Scorpion toxin-like"/>
    <property type="match status" value="1"/>
</dbReference>
<dbReference type="PROSITE" id="PS51863">
    <property type="entry name" value="LCN_CSAB"/>
    <property type="match status" value="1"/>
</dbReference>
<accession>P46115</accession>
<sequence>KKDGYPVEGDNCAFACFGYDNAYCDKLCKDKKADDGYCVWSPDCYCYGLPEHILKEPTKTSGRC</sequence>
<organism>
    <name type="scientific">Tityus serrulatus</name>
    <name type="common">Brazilian scorpion</name>
    <dbReference type="NCBI Taxonomy" id="6887"/>
    <lineage>
        <taxon>Eukaryota</taxon>
        <taxon>Metazoa</taxon>
        <taxon>Ecdysozoa</taxon>
        <taxon>Arthropoda</taxon>
        <taxon>Chelicerata</taxon>
        <taxon>Arachnida</taxon>
        <taxon>Scorpiones</taxon>
        <taxon>Buthida</taxon>
        <taxon>Buthoidea</taxon>
        <taxon>Buthidae</taxon>
        <taxon>Tityus</taxon>
    </lineage>
</organism>
<comment type="function">
    <text evidence="2 5">Alpha toxins bind voltage-independently at site-3 of sodium channels (Nav) and inhibit the inactivation of the activated channels, thereby blocking neuronal transmission. By extending the depolarized period it indirectly affects beta-cell voltage-dependent potassium channels, thus increasing potassium permeability.</text>
</comment>
<comment type="subcellular location">
    <subcellularLocation>
        <location evidence="3 4">Secreted</location>
    </subcellularLocation>
</comment>
<comment type="tissue specificity">
    <text evidence="9">Expressed by the venom gland.</text>
</comment>
<comment type="domain">
    <text evidence="8">Has the structural arrangement of an alpha-helix connected to antiparallel beta-sheets by disulfide bonds (CS-alpha/beta).</text>
</comment>
<comment type="toxic dose">
    <text evidence="5">LD(50) is 94 +/- 7 ug/kg by intravenous injection into mice.</text>
</comment>
<comment type="similarity">
    <text evidence="8">Belongs to the long (4 C-C) scorpion toxin superfamily. Sodium channel inhibitor family. Alpha subfamily.</text>
</comment>
<name>SCX5_TITSE</name>
<protein>
    <recommendedName>
        <fullName evidence="6">Alpha-toxin Ts5</fullName>
    </recommendedName>
    <alternativeName>
        <fullName>P-alpha* NaTx3.2</fullName>
    </alternativeName>
    <alternativeName>
        <fullName>Tityustoxin V</fullName>
        <shortName>Toxin V</shortName>
        <shortName>Ts V</shortName>
        <shortName>TsTX-V</shortName>
        <shortName>TsV</shortName>
    </alternativeName>
    <alternativeName>
        <fullName>Tityustoxin-5</fullName>
    </alternativeName>
</protein>
<proteinExistence type="evidence at protein level"/>
<reference key="1">
    <citation type="journal article" date="1995" name="Biochim. Biophys. Acta">
        <title>Amino acid sequence of TsTX-V, an alpha-toxin from Tityus serrulatus scorpion venom, and its effect on K+ permeability of beta-cells from isolated rat islets of Langerhans.</title>
        <authorList>
            <person name="Marangoni S."/>
            <person name="Toyama M.H."/>
            <person name="Arantes E.C."/>
            <person name="Giglio J.R."/>
            <person name="da Silva C.A."/>
            <person name="Carneiro E.M."/>
            <person name="Goncalves A.A."/>
            <person name="Oliveira B."/>
        </authorList>
    </citation>
    <scope>PROTEIN SEQUENCE</scope>
    <scope>SUBCELLULAR LOCATION</scope>
    <source>
        <tissue>Venom</tissue>
    </source>
</reference>
<reference key="2">
    <citation type="journal article" date="2014" name="Toxicon">
        <title>Influence of post-starvation extraction time and prey-specific diet in Tityus serrulatus scorpion venom composition and hyaluronidase activity.</title>
        <authorList>
            <person name="Pucca M.B."/>
            <person name="Amorim F.G."/>
            <person name="Cerni F.A."/>
            <person name="Bordon K.C.F."/>
            <person name="Cardoso I.A."/>
            <person name="Anjolette F.A."/>
            <person name="Arantes E.C."/>
        </authorList>
    </citation>
    <scope>PROTEIN SEQUENCE OF 6-20</scope>
    <scope>SUBCELLULAR LOCATION</scope>
    <source>
        <tissue evidence="7">Venom</tissue>
    </source>
</reference>
<reference key="3">
    <citation type="journal article" date="1994" name="Biochim. Biophys. Acta">
        <title>Isolation and characterization of TsTX-V, a new neurotoxin from Tityus serrulatus scorpion venom which delays the inactivation of Na+ channels.</title>
        <authorList>
            <person name="Arantes E.C."/>
            <person name="Riccioppo Neto F."/>
            <person name="Sampaio S.V."/>
            <person name="Vieira C.A."/>
            <person name="Giglio J.R."/>
        </authorList>
    </citation>
    <scope>AMINO ACID COMPOSITION</scope>
    <scope>FUNCTION</scope>
    <scope>TOXIC DOSE</scope>
</reference>
<reference key="4">
    <citation type="journal article" date="2003" name="Toxicon">
        <title>Participation of Na(+) channels in the potentiation by Tityus serrulatus alpha-toxin TsTx-V of glucose-induced electrical activity and insulin secretion in rodent islet beta-cells.</title>
        <authorList>
            <person name="Goncalves A.A."/>
            <person name="Toyama M.H."/>
            <person name="Carneiro E.M."/>
            <person name="Marangoni S."/>
            <person name="Arantes E.C."/>
            <person name="Giglio J.R."/>
            <person name="Boschero A.C."/>
        </authorList>
    </citation>
    <scope>FUNCTION</scope>
    <scope>3D-STRUCTURE MODELING</scope>
</reference>
<reference key="5">
    <citation type="journal article" date="2009" name="Protein Pept. Lett.">
        <title>Tityus serrulatus scorpion venom and toxins: an overview.</title>
        <authorList>
            <person name="Cologna C.T."/>
            <person name="Marcussi S."/>
            <person name="Giglio J.R."/>
            <person name="Soares A.M."/>
            <person name="Arantes E.C."/>
        </authorList>
    </citation>
    <scope>NOMENCLATURE</scope>
</reference>
<reference key="6">
    <citation type="journal article" date="2012" name="PLoS ONE">
        <title>Identification and phylogenetic analysis of Tityus pachyurus and Tityus obscurus novel putative Na+-channel scorpion toxins.</title>
        <authorList>
            <person name="Guerrero-Vargas J.A."/>
            <person name="Mourao C.B."/>
            <person name="Quintero-Hernandez V."/>
            <person name="Possani L.D."/>
            <person name="Schwartz E.F."/>
        </authorList>
    </citation>
    <scope>NOMENCLATURE</scope>
</reference>